<organism>
    <name type="scientific">Listeria monocytogenes serotype 4a (strain HCC23)</name>
    <dbReference type="NCBI Taxonomy" id="552536"/>
    <lineage>
        <taxon>Bacteria</taxon>
        <taxon>Bacillati</taxon>
        <taxon>Bacillota</taxon>
        <taxon>Bacilli</taxon>
        <taxon>Bacillales</taxon>
        <taxon>Listeriaceae</taxon>
        <taxon>Listeria</taxon>
    </lineage>
</organism>
<sequence length="245" mass="27929">MKIDILSIFPDMFSGVTGNSIIKKAIENERVAVEVTDFREYAEGKHHIVDDYPYGGGAGMLLKAQPIFDAVQAVKEKQPETKPRVILMDPAGKRFDQKMAEEFAEEEHLVFICGHYEGYDERIREHLVTDEVSIGDYILTGGEIGAMIVMDSVIRLLPGVLGNKDSAVTDSFSTGLLEHPHYTRPADFRGMKVPDILLSGNHAWIEEWRDKESLKRTYERRPDLLKNYPLTDKQKTWLKEWSDSK</sequence>
<accession>B8DDW1</accession>
<feature type="chain" id="PRO_1000198576" description="tRNA (guanine-N(1)-)-methyltransferase">
    <location>
        <begin position="1"/>
        <end position="245"/>
    </location>
</feature>
<feature type="binding site" evidence="1">
    <location>
        <position position="114"/>
    </location>
    <ligand>
        <name>S-adenosyl-L-methionine</name>
        <dbReference type="ChEBI" id="CHEBI:59789"/>
    </ligand>
</feature>
<feature type="binding site" evidence="1">
    <location>
        <begin position="134"/>
        <end position="139"/>
    </location>
    <ligand>
        <name>S-adenosyl-L-methionine</name>
        <dbReference type="ChEBI" id="CHEBI:59789"/>
    </ligand>
</feature>
<keyword id="KW-0963">Cytoplasm</keyword>
<keyword id="KW-0489">Methyltransferase</keyword>
<keyword id="KW-0949">S-adenosyl-L-methionine</keyword>
<keyword id="KW-0808">Transferase</keyword>
<keyword id="KW-0819">tRNA processing</keyword>
<name>TRMD_LISMH</name>
<comment type="function">
    <text evidence="1">Specifically methylates guanosine-37 in various tRNAs.</text>
</comment>
<comment type="catalytic activity">
    <reaction evidence="1">
        <text>guanosine(37) in tRNA + S-adenosyl-L-methionine = N(1)-methylguanosine(37) in tRNA + S-adenosyl-L-homocysteine + H(+)</text>
        <dbReference type="Rhea" id="RHEA:36899"/>
        <dbReference type="Rhea" id="RHEA-COMP:10145"/>
        <dbReference type="Rhea" id="RHEA-COMP:10147"/>
        <dbReference type="ChEBI" id="CHEBI:15378"/>
        <dbReference type="ChEBI" id="CHEBI:57856"/>
        <dbReference type="ChEBI" id="CHEBI:59789"/>
        <dbReference type="ChEBI" id="CHEBI:73542"/>
        <dbReference type="ChEBI" id="CHEBI:74269"/>
        <dbReference type="EC" id="2.1.1.228"/>
    </reaction>
</comment>
<comment type="subunit">
    <text evidence="1">Homodimer.</text>
</comment>
<comment type="subcellular location">
    <subcellularLocation>
        <location evidence="1">Cytoplasm</location>
    </subcellularLocation>
</comment>
<comment type="similarity">
    <text evidence="1">Belongs to the RNA methyltransferase TrmD family.</text>
</comment>
<proteinExistence type="inferred from homology"/>
<dbReference type="EC" id="2.1.1.228" evidence="1"/>
<dbReference type="EMBL" id="CP001175">
    <property type="protein sequence ID" value="ACK39120.1"/>
    <property type="molecule type" value="Genomic_DNA"/>
</dbReference>
<dbReference type="RefSeq" id="WP_003726803.1">
    <property type="nucleotide sequence ID" value="NC_011660.1"/>
</dbReference>
<dbReference type="SMR" id="B8DDW1"/>
<dbReference type="KEGG" id="lmh:LMHCC_0766"/>
<dbReference type="HOGENOM" id="CLU_047363_0_1_9"/>
<dbReference type="GO" id="GO:0005829">
    <property type="term" value="C:cytosol"/>
    <property type="evidence" value="ECO:0007669"/>
    <property type="project" value="TreeGrafter"/>
</dbReference>
<dbReference type="GO" id="GO:0052906">
    <property type="term" value="F:tRNA (guanine(37)-N1)-methyltransferase activity"/>
    <property type="evidence" value="ECO:0007669"/>
    <property type="project" value="UniProtKB-UniRule"/>
</dbReference>
<dbReference type="GO" id="GO:0002939">
    <property type="term" value="P:tRNA N1-guanine methylation"/>
    <property type="evidence" value="ECO:0007669"/>
    <property type="project" value="TreeGrafter"/>
</dbReference>
<dbReference type="CDD" id="cd18080">
    <property type="entry name" value="TrmD-like"/>
    <property type="match status" value="1"/>
</dbReference>
<dbReference type="FunFam" id="1.10.1270.20:FF:000001">
    <property type="entry name" value="tRNA (guanine-N(1)-)-methyltransferase"/>
    <property type="match status" value="1"/>
</dbReference>
<dbReference type="FunFam" id="3.40.1280.10:FF:000001">
    <property type="entry name" value="tRNA (guanine-N(1)-)-methyltransferase"/>
    <property type="match status" value="1"/>
</dbReference>
<dbReference type="Gene3D" id="3.40.1280.10">
    <property type="match status" value="1"/>
</dbReference>
<dbReference type="Gene3D" id="1.10.1270.20">
    <property type="entry name" value="tRNA(m1g37)methyltransferase, domain 2"/>
    <property type="match status" value="1"/>
</dbReference>
<dbReference type="HAMAP" id="MF_00605">
    <property type="entry name" value="TrmD"/>
    <property type="match status" value="1"/>
</dbReference>
<dbReference type="InterPro" id="IPR029028">
    <property type="entry name" value="Alpha/beta_knot_MTases"/>
</dbReference>
<dbReference type="InterPro" id="IPR023148">
    <property type="entry name" value="tRNA_m1G_MeTrfase_C_sf"/>
</dbReference>
<dbReference type="InterPro" id="IPR002649">
    <property type="entry name" value="tRNA_m1G_MeTrfase_TrmD"/>
</dbReference>
<dbReference type="InterPro" id="IPR029026">
    <property type="entry name" value="tRNA_m1G_MTases_N"/>
</dbReference>
<dbReference type="InterPro" id="IPR016009">
    <property type="entry name" value="tRNA_MeTrfase_TRMD/TRM10"/>
</dbReference>
<dbReference type="NCBIfam" id="NF000648">
    <property type="entry name" value="PRK00026.1"/>
    <property type="match status" value="1"/>
</dbReference>
<dbReference type="NCBIfam" id="TIGR00088">
    <property type="entry name" value="trmD"/>
    <property type="match status" value="1"/>
</dbReference>
<dbReference type="PANTHER" id="PTHR46417">
    <property type="entry name" value="TRNA (GUANINE-N(1)-)-METHYLTRANSFERASE"/>
    <property type="match status" value="1"/>
</dbReference>
<dbReference type="PANTHER" id="PTHR46417:SF1">
    <property type="entry name" value="TRNA (GUANINE-N(1)-)-METHYLTRANSFERASE"/>
    <property type="match status" value="1"/>
</dbReference>
<dbReference type="Pfam" id="PF01746">
    <property type="entry name" value="tRNA_m1G_MT"/>
    <property type="match status" value="1"/>
</dbReference>
<dbReference type="PIRSF" id="PIRSF000386">
    <property type="entry name" value="tRNA_mtase"/>
    <property type="match status" value="1"/>
</dbReference>
<dbReference type="SUPFAM" id="SSF75217">
    <property type="entry name" value="alpha/beta knot"/>
    <property type="match status" value="1"/>
</dbReference>
<protein>
    <recommendedName>
        <fullName evidence="1">tRNA (guanine-N(1)-)-methyltransferase</fullName>
        <ecNumber evidence="1">2.1.1.228</ecNumber>
    </recommendedName>
    <alternativeName>
        <fullName evidence="1">M1G-methyltransferase</fullName>
    </alternativeName>
    <alternativeName>
        <fullName evidence="1">tRNA [GM37] methyltransferase</fullName>
    </alternativeName>
</protein>
<gene>
    <name evidence="1" type="primary">trmD</name>
    <name type="ordered locus">LMHCC_0766</name>
</gene>
<reference key="1">
    <citation type="journal article" date="2011" name="J. Bacteriol.">
        <title>Genome sequence of lineage III Listeria monocytogenes strain HCC23.</title>
        <authorList>
            <person name="Steele C.L."/>
            <person name="Donaldson J.R."/>
            <person name="Paul D."/>
            <person name="Banes M.M."/>
            <person name="Arick T."/>
            <person name="Bridges S.M."/>
            <person name="Lawrence M.L."/>
        </authorList>
    </citation>
    <scope>NUCLEOTIDE SEQUENCE [LARGE SCALE GENOMIC DNA]</scope>
    <source>
        <strain>HCC23</strain>
    </source>
</reference>
<evidence type="ECO:0000255" key="1">
    <source>
        <dbReference type="HAMAP-Rule" id="MF_00605"/>
    </source>
</evidence>